<gene>
    <name evidence="9 15" type="primary">lhr</name>
    <name evidence="14" type="ordered locus">MSMEG_1757</name>
    <name evidence="15" type="ordered locus">MSMEI_1715</name>
</gene>
<protein>
    <recommendedName>
        <fullName>Lhr helicase/ probable uracil glycosylase</fullName>
        <ecNumber evidence="1">3.2.2.27</ecNumber>
        <ecNumber evidence="4 5 7">5.6.2.-</ecNumber>
        <ecNumber evidence="4 7">5.6.2.4</ecNumber>
    </recommendedName>
    <alternativeName>
        <fullName evidence="10">DNA and RNA:DNA 3'-5' helicase Lhr</fullName>
    </alternativeName>
    <alternativeName>
        <fullName evidence="9">Long helicase-related protein</fullName>
    </alternativeName>
</protein>
<organism>
    <name type="scientific">Mycolicibacterium smegmatis (strain ATCC 700084 / mc(2)155)</name>
    <name type="common">Mycobacterium smegmatis</name>
    <dbReference type="NCBI Taxonomy" id="246196"/>
    <lineage>
        <taxon>Bacteria</taxon>
        <taxon>Bacillati</taxon>
        <taxon>Actinomycetota</taxon>
        <taxon>Actinomycetes</taxon>
        <taxon>Mycobacteriales</taxon>
        <taxon>Mycobacteriaceae</taxon>
        <taxon>Mycolicibacterium</taxon>
    </lineage>
</organism>
<accession>A0QT91</accession>
<accession>I7FYR6</accession>
<feature type="chain" id="PRO_0000462452" description="Lhr helicase/ probable uracil glycosylase">
    <location>
        <begin position="1"/>
        <end position="1507"/>
    </location>
</feature>
<feature type="domain" description="Helicase ATP-binding" evidence="2">
    <location>
        <begin position="35"/>
        <end position="226"/>
    </location>
</feature>
<feature type="domain" description="Helicase C-terminal" evidence="3">
    <location>
        <begin position="257"/>
        <end position="451"/>
    </location>
</feature>
<feature type="region of interest" description="Lhr-Core" evidence="12">
    <location>
        <begin position="1"/>
        <end position="856"/>
    </location>
</feature>
<feature type="region of interest" description="WH domain" evidence="13">
    <location>
        <begin position="436"/>
        <end position="529"/>
    </location>
</feature>
<feature type="region of interest" description="Domain 4" evidence="5">
    <location>
        <begin position="530"/>
        <end position="856"/>
    </location>
</feature>
<feature type="region of interest" description="CTD" evidence="12">
    <location>
        <begin position="857"/>
        <end position="1507"/>
    </location>
</feature>
<feature type="short sequence motif" description="DEAH box" evidence="2">
    <location>
        <begin position="170"/>
        <end position="173"/>
    </location>
</feature>
<feature type="binding site" evidence="11 16">
    <location>
        <position position="24"/>
    </location>
    <ligand>
        <name>ATP</name>
        <dbReference type="ChEBI" id="CHEBI:30616"/>
    </ligand>
</feature>
<feature type="binding site" evidence="11 16">
    <location>
        <position position="31"/>
    </location>
    <ligand>
        <name>ATP</name>
        <dbReference type="ChEBI" id="CHEBI:30616"/>
    </ligand>
</feature>
<feature type="binding site" evidence="11 16">
    <location>
        <position position="54"/>
    </location>
    <ligand>
        <name>ATP</name>
        <dbReference type="ChEBI" id="CHEBI:30616"/>
    </ligand>
</feature>
<feature type="binding site" evidence="11 16">
    <location>
        <position position="55"/>
    </location>
    <ligand>
        <name>ATP</name>
        <dbReference type="ChEBI" id="CHEBI:30616"/>
    </ligand>
</feature>
<feature type="binding site" evidence="5 17">
    <location>
        <position position="122"/>
    </location>
    <ligand>
        <name>ssDNA</name>
        <dbReference type="ChEBI" id="CHEBI:9160"/>
    </ligand>
</feature>
<feature type="binding site" evidence="5 17">
    <location>
        <position position="131"/>
    </location>
    <ligand>
        <name>ssDNA</name>
        <dbReference type="ChEBI" id="CHEBI:9160"/>
    </ligand>
</feature>
<feature type="binding site" evidence="5 17">
    <location>
        <position position="145"/>
    </location>
    <ligand>
        <name>ssDNA</name>
        <dbReference type="ChEBI" id="CHEBI:9160"/>
    </ligand>
</feature>
<feature type="binding site" evidence="5 17">
    <location>
        <position position="148"/>
    </location>
    <ligand>
        <name>ssDNA</name>
        <dbReference type="ChEBI" id="CHEBI:9160"/>
    </ligand>
</feature>
<feature type="binding site" evidence="5 17">
    <location>
        <position position="152"/>
    </location>
    <ligand>
        <name>ssDNA</name>
        <dbReference type="ChEBI" id="CHEBI:9160"/>
    </ligand>
</feature>
<feature type="binding site" evidence="11">
    <location>
        <position position="170"/>
    </location>
    <ligand>
        <name>ATP</name>
        <dbReference type="ChEBI" id="CHEBI:30616"/>
    </ligand>
</feature>
<feature type="binding site" evidence="11 16">
    <location>
        <position position="171"/>
    </location>
    <ligand>
        <name>ATP</name>
        <dbReference type="ChEBI" id="CHEBI:30616"/>
    </ligand>
</feature>
<feature type="binding site" evidence="5 17">
    <location>
        <position position="253"/>
    </location>
    <ligand>
        <name>ssDNA</name>
        <dbReference type="ChEBI" id="CHEBI:9160"/>
    </ligand>
</feature>
<feature type="binding site" evidence="5 17">
    <location>
        <position position="255"/>
    </location>
    <ligand>
        <name>ssDNA</name>
        <dbReference type="ChEBI" id="CHEBI:9160"/>
    </ligand>
</feature>
<feature type="binding site" evidence="5 17">
    <location>
        <position position="279"/>
    </location>
    <ligand>
        <name>ssDNA</name>
        <dbReference type="ChEBI" id="CHEBI:9160"/>
    </ligand>
</feature>
<feature type="binding site" evidence="11">
    <location>
        <position position="377"/>
    </location>
    <ligand>
        <name>ATP</name>
        <dbReference type="ChEBI" id="CHEBI:30616"/>
    </ligand>
</feature>
<feature type="binding site" evidence="11 16">
    <location>
        <position position="394"/>
    </location>
    <ligand>
        <name>ATP</name>
        <dbReference type="ChEBI" id="CHEBI:30616"/>
    </ligand>
</feature>
<feature type="binding site" evidence="11 16">
    <location>
        <position position="397"/>
    </location>
    <ligand>
        <name>ATP</name>
        <dbReference type="ChEBI" id="CHEBI:30616"/>
    </ligand>
</feature>
<feature type="binding site" evidence="5 17">
    <location>
        <position position="410"/>
    </location>
    <ligand>
        <name>ssDNA</name>
        <dbReference type="ChEBI" id="CHEBI:9160"/>
    </ligand>
</feature>
<feature type="binding site" evidence="5 17">
    <location>
        <position position="518"/>
    </location>
    <ligand>
        <name>ssDNA</name>
        <dbReference type="ChEBI" id="CHEBI:9160"/>
    </ligand>
</feature>
<feature type="binding site" evidence="5 17">
    <location>
        <position position="519"/>
    </location>
    <ligand>
        <name>ssDNA</name>
        <dbReference type="ChEBI" id="CHEBI:9160"/>
    </ligand>
</feature>
<feature type="binding site" evidence="5 17">
    <location>
        <position position="528"/>
    </location>
    <ligand>
        <name>ssDNA</name>
        <dbReference type="ChEBI" id="CHEBI:9160"/>
    </ligand>
</feature>
<feature type="binding site" evidence="5 17">
    <location>
        <position position="597"/>
    </location>
    <ligand>
        <name>ssDNA</name>
        <dbReference type="ChEBI" id="CHEBI:9160"/>
    </ligand>
</feature>
<feature type="binding site" evidence="5 17">
    <location>
        <position position="600"/>
    </location>
    <ligand>
        <name>ssDNA</name>
        <dbReference type="ChEBI" id="CHEBI:9160"/>
    </ligand>
</feature>
<feature type="binding site" evidence="5 17">
    <location>
        <position position="777"/>
    </location>
    <ligand>
        <name>ssDNA</name>
        <dbReference type="ChEBI" id="CHEBI:9160"/>
    </ligand>
</feature>
<feature type="site" description="Forms salt bridge clamp with E-550" evidence="5">
    <location>
        <position position="280"/>
    </location>
</feature>
<feature type="site" description="Wedges between bases of the loading strand" evidence="5">
    <location>
        <position position="528"/>
    </location>
</feature>
<feature type="site" description="Forms salt bridge clamp with R-280" evidence="5">
    <location>
        <position position="550"/>
    </location>
</feature>
<feature type="mutagenesis site" description="Decreased RNA:DNA unwinding, wild-type ATPase and strand displacement on a biotinylated substrate." evidence="5">
    <original>R</original>
    <variation>A</variation>
    <location>
        <position position="122"/>
    </location>
</feature>
<feature type="mutagenesis site" description="Nearly complete loss of RNA:DNA unwinding, decreased ATPase and strand displacement on a biotinylated substrate." evidence="5">
    <original>T</original>
    <variation>A</variation>
    <location>
        <position position="145"/>
    </location>
</feature>
<feature type="mutagenesis site" description="Decreased RNA:DNA unwinding, wild-type ATPase and strand displacement on a biotinylated substrate." evidence="5">
    <original>S</original>
    <variation>A</variation>
    <location>
        <position position="148"/>
    </location>
</feature>
<feature type="mutagenesis site" description="Does not complement the MMC or cisplatin sensitivity of a deletion, probably has no ATPase activity. Does not complement the trioxsalen sensitivity of a deletion." evidence="7 8">
    <original>DE</original>
    <variation>AA</variation>
    <location>
        <begin position="170"/>
        <end position="171"/>
    </location>
</feature>
<feature type="mutagenesis site" description="Nearly complete loss of RNA:DNA unwinding, increased ATPase, greatly decreased strand displacement on a biotinylated substrate." evidence="5">
    <original>R</original>
    <variation>A</variation>
    <location>
        <position position="279"/>
    </location>
</feature>
<feature type="mutagenesis site" description="Nearly complete loss of RNA:DNA unwinding, wild-type ATPase and strand displacement on a biotinylated substrate." evidence="5">
    <original>I</original>
    <variation>A</variation>
    <location>
        <position position="528"/>
    </location>
</feature>
<feature type="mutagenesis site" description="Decreased RNA:DNA unwinding, wild-type ATPase." evidence="5">
    <original>E</original>
    <variation>A</variation>
    <location>
        <position position="550"/>
    </location>
</feature>
<feature type="mutagenesis site" description="Loss of RNA:DNA unwinding, wild-type ATPase, no strand displacement on a biotinylated substrate. Does not complement the MMC or cisplatin sensitivity of a deletion. Does not complement the trioxsalen sensitivity of a deletion." evidence="5 7 8">
    <original>W</original>
    <variation>A</variation>
    <location>
        <position position="597"/>
    </location>
</feature>
<feature type="mutagenesis site" description="Decreased RNA:DNA unwinding, wild-type ATPase and strand displacement on a biotinylated substrate." evidence="5">
    <original>R</original>
    <variation>A</variation>
    <location>
        <position position="777"/>
    </location>
</feature>
<feature type="mutagenesis site" description="Decreased oligomerization, does not complement MMC or cisplatin sensitivity of a deletion, still unwinds RNA:DNA hybrid but decreased unwinding of DNA:DNA hybrid; when associated with A-1286. Does not complement the trioxsalen sensitivity of a deletion; when associated with A-1286." evidence="7 8">
    <original>HGGAYFFR</original>
    <variation>AGGAYFFA</variation>
    <location>
        <begin position="1199"/>
        <end position="1206"/>
    </location>
</feature>
<feature type="mutagenesis site" description="Decreased oligomerization, does not complement MMC or cisplatin sensitivity of a deletion, still unwinds RNA:DNA hybrid but decreased unwinding of DNA:DNA hybrid; when associated with 1199-A--A-1206. Does not complement the trioxsalen sensitivity of a deletion; when associated with 1199-A--A-1206." evidence="7 8">
    <original>R</original>
    <variation>A</variation>
    <location>
        <position position="1286"/>
    </location>
</feature>
<evidence type="ECO:0000250" key="1">
    <source>
        <dbReference type="UniProtKB" id="P30015"/>
    </source>
</evidence>
<evidence type="ECO:0000255" key="2">
    <source>
        <dbReference type="PROSITE-ProRule" id="PRU00541"/>
    </source>
</evidence>
<evidence type="ECO:0000255" key="3">
    <source>
        <dbReference type="PROSITE-ProRule" id="PRU00542"/>
    </source>
</evidence>
<evidence type="ECO:0000269" key="4">
    <source>
    </source>
</evidence>
<evidence type="ECO:0000269" key="5">
    <source>
    </source>
</evidence>
<evidence type="ECO:0000269" key="6">
    <source>
    </source>
</evidence>
<evidence type="ECO:0000269" key="7">
    <source>
    </source>
</evidence>
<evidence type="ECO:0000269" key="8">
    <source>
    </source>
</evidence>
<evidence type="ECO:0000303" key="9">
    <source>
    </source>
</evidence>
<evidence type="ECO:0000305" key="10"/>
<evidence type="ECO:0000305" key="11">
    <source>
    </source>
</evidence>
<evidence type="ECO:0000305" key="12">
    <source>
    </source>
</evidence>
<evidence type="ECO:0000305" key="13">
    <source>
    </source>
</evidence>
<evidence type="ECO:0000312" key="14">
    <source>
        <dbReference type="EMBL" id="ABK70223.1"/>
    </source>
</evidence>
<evidence type="ECO:0000312" key="15">
    <source>
        <dbReference type="EMBL" id="AFP38187.1"/>
    </source>
</evidence>
<evidence type="ECO:0000312" key="16">
    <source>
        <dbReference type="PDB" id="5V9X"/>
    </source>
</evidence>
<evidence type="ECO:0007744" key="17">
    <source>
        <dbReference type="PDB" id="5V9X"/>
    </source>
</evidence>
<evidence type="ECO:0007744" key="18">
    <source>
        <dbReference type="PDB" id="7LHL"/>
    </source>
</evidence>
<name>LHR_MYCS2</name>
<proteinExistence type="evidence at protein level"/>
<sequence>MTTNGADPLGRFSALTREWFTTAFAAPTPAQADAWSAISEGNNTLVIAPTGSGKTLAAFLWAIDRLADPAREPSQGTQVLYVSPLKALAVDVERNLRTPLTGITRVAERHGLPAPSITVGVRSGDTPPNQRRAMIANPPDVLITTPESLFLMLTSAARETLTSVRTVIVDEVHAVAATKRGAHLALSLERLDQLLDTPAQRIGLSATVRPPEEVARFLSGQAPTTIVCPPAAKTFDLSVQVPVPDMANLDNNSIWPDVEERIVDLVEAHNSSIVFANSRRLAERLTSRLNEIHAERSGIELPAGPNPEVGGGAPAHLMGSGQANGAPPLLARAHHGSVSKEQRAQVEDDLKSGRLRAVVATSSLELGIDMGAVDLVIQVEAPPSVASGLQRVGRAGHQVGEISQGVLFPKHRTDLIGCAVTVQRMQTGDIETLRVPANPLDVLAQHTVAVAALEPVDADAWFDAVRRSAPFATLPRSAFEATLDLLSGKYPSTEFAELRPRLVYDRDTGTLTARPGAQRLAVTSGGAIPDRGMFTVYLASETEKPSRVGELDEEMVYESRPGDVISLGATSWRITEITHDRVLVIPAPGQPARLPFWRGDSVGRPAELGAAVGAFTGELASLDRKAFDKRCQKMGFAGYATDNLHQLLREQREATGVVPSDTTFVVERFRDELGDWRVILHSPYGLRVHGPLALAVGRRLRERYGIDEKPTASDDGIIVRLPDSGDTPPGADLFVFDADEIEPIVTAEVGGSALFASRFRECAARALLLPRRHPGKRSPLWHQRQRAAQLLDIARKYPDFPIVLEAVRECLQDVYDVPALIELMHKIAQRRLRIVEVETATPSPFAASLLFGYVGAFMYEGDSPLAERRAAALALDTVLLSELLGRVELRELLDPAVVASTSAQLQHLTPERAARDAEGVADLLRLLGPLTEADIAQRCTADNIGAWLDGLHAAKRALPVTYAGQTWWAAVEDIGLLRDGIGVPVPVGVPAAFTESASDPLGDLIGRYARTRGPFTTEQTAARFGLGVRVASDVLSRMAVDGRLIRGEFAADLSGEQWCDAQVLKILRRRSLAALRAQVEPVSTDAYARFLPSWQHVGSTNTTGIDGLATVIEQLAGVPIPASAVESLVFPQRVRDYQPAMLDELLASGEVMWSGAGQIGNGDGWVAFHLADTAPLTLTHGAEIEFTDTHRVILETLGHGGAYFFRQLTDGTVEGTAGQELKQALWELIWAGWVTGDTFAPVRAVLSGPRRSGAPAHRQRQRPPRLSRYSVAHAQTRGTDPTVSGRWSALPAAEPDSTVRAHFQAELLLGRHGVLTKGAVGAEGVPGGFATLYKVLSTFEDAGRCQRGYFVESLGGAQFAVASTVDRLRSYLDNVDPERPEYHAVVLAATDPANPYGAALGWPTDSEAHRPGRKAGALVALVDGRLVWFLERGGRSLLSFGADADAQRAAAGALTDLVSAGRIPSLLVERINGVAVLDPDVDAERAVVQDALLGAGLSRTPRGLRLR</sequence>
<comment type="function">
    <text evidence="4 5 7 8">A 3'-5' helicase involved in repair of at least 3 types of DNA cross-links, mitomycin C (MMC), cisplatin, and psoralen-UVA (PubMed:36610794, PubMed:39012146). Translocates 3'-to-5' on single-stranded (ss)DNA, unwinding any encountered duplex nucleic acid (PubMed:23549043, PubMed:29165676). A 3'-ssDNA loading strand of at least 15 nucleotides is required for helicase activity (PubMed:23549043). An RNA:DNA hybrid with a 3'-ssDNA loading strand is an 8-fold better helicase substrate than 3'-tailed double-stranded (ds)DNA; substrates where the helicase loads on a 3'-ssRNA tail (DNA:RNA and RNA:RNA) are not unwound (PubMed:23549043, PubMed:29165676, PubMed:36610794). Only (d)ATP is hydrolyzed by the protein, which has no ATPase activity in the absence of ssDNA or ssRNA (PubMed:23549043). Arg-279 and Trp-597 are needed to couple ATP hydrolysis to mechanical work; a salt bridge between Arg-280 and Glu-550 closes a clamp around the ssDNA that is not large enough for dsDNA, while Ile-528 wedges between bases of the loading strand (PubMed:29165676).</text>
</comment>
<comment type="function">
    <text evidence="1">Excises uracil residues from ssDNA. Uracil residues in DNA can arise as a result of misincorporation of dUMP residues by DNA polymerase or due to deamination of cytosine.</text>
</comment>
<comment type="catalytic activity">
    <reaction evidence="4 7">
        <text>Couples ATP hydrolysis with the unwinding of duplex DNA by translocating in the 3'-5' direction.</text>
        <dbReference type="EC" id="5.6.2.4"/>
    </reaction>
</comment>
<comment type="catalytic activity">
    <reaction evidence="4 5">
        <text>ATP + H2O = ADP + phosphate + H(+)</text>
        <dbReference type="Rhea" id="RHEA:13065"/>
        <dbReference type="ChEBI" id="CHEBI:15377"/>
        <dbReference type="ChEBI" id="CHEBI:15378"/>
        <dbReference type="ChEBI" id="CHEBI:30616"/>
        <dbReference type="ChEBI" id="CHEBI:43474"/>
        <dbReference type="ChEBI" id="CHEBI:456216"/>
        <dbReference type="EC" id="5.6.2.4"/>
    </reaction>
</comment>
<comment type="catalytic activity">
    <reaction evidence="1">
        <text>Hydrolyzes single-stranded DNA or mismatched double-stranded DNA and polynucleotides, releasing free uracil.</text>
        <dbReference type="EC" id="3.2.2.27"/>
    </reaction>
</comment>
<comment type="cofactor">
    <cofactor evidence="4">
        <name>Ca(2+)</name>
        <dbReference type="ChEBI" id="CHEBI:29108"/>
    </cofactor>
    <text evidence="4">ssDNA-dependent ATPase is most efficient with Ca(2+); Mn(2+) and Mn(2+) are 60% less effective.</text>
</comment>
<comment type="biophysicochemical properties">
    <kinetics>
        <KM evidence="4">0.1 mM for ATP</KM>
    </kinetics>
    <phDependence>
        <text evidence="4">Optimum pH is 5.5 to 7.0 for ATPase.</text>
    </phDependence>
</comment>
<comment type="subunit">
    <text evidence="4 6">Monomer (PubMed:23549043). Homooligomerizes, possibly a homotetramer (PubMed:33744958).</text>
</comment>
<comment type="induction">
    <text evidence="7">Induced by treatment with mitomycin C (MMC) (at protein level).</text>
</comment>
<comment type="domain">
    <text evidence="4 5 6 7">The Lhr-Core is composed of 2 helicase domains, a winged-helix (WH) domain, and Lhr-specific domain 4 (PubMed:29165676, PubMed:33744958). It is followed by the C-terminal domain (CTD) (PubMed:36610794, PubMed:29165676, PubMed:33744958). A fragment of residues 1-562 has no ssDNA-dependent ATPase or helicase activity (PubMed:23549043). The C-terminus is required for translocation through a DNA:DNA hybrid; a fragment with residues 1-1098 unwinds an RNA:DNA hybrid as well as full-length protein but has only 14% of its activity on a dsDNA (PubMed:23549043). A 13-mer ssDNA binds in an extended conformation across the Lhr-Core surface, contacting the first 4 domains (PubMed:29165676). The C-terminus (CTD, residues 863-1507) is probably responsible for oligomerization, has 5 winged-helix domains and a beta-barrel (PubMed:33744958). The Lhr-Core does not complement a deletion for MMC or cisplatin sensitivity (PubMed:36610794).</text>
</comment>
<comment type="disruption phenotype">
    <text evidence="7 8">Cells are more sensitive to killing by DNA cross-linking agents mitomycin C (MMC) and cisplatin but not UV light or methyl methanesulfonate (PubMed:36610794). Double lhr-uvrD1 deletions are 10-fold more sensitive to MMC and cisplatin than single deletions (PubMed:36610794). Greatly increased sensitivity to trioxsalen (also called trimethlypsoralen it intercalates into DNA and forms interstrand adducts and cross-links after UVA exposure) (PubMed:39012146). A double lhr-uvrD1 deletion is even more sensitive to trioxsalen (PubMed:39012146).</text>
</comment>
<comment type="similarity">
    <text evidence="10">Belongs to the Lhr helicase family.</text>
</comment>
<keyword id="KW-0002">3D-structure</keyword>
<keyword id="KW-0067">ATP-binding</keyword>
<keyword id="KW-0227">DNA damage</keyword>
<keyword id="KW-0234">DNA repair</keyword>
<keyword id="KW-0238">DNA-binding</keyword>
<keyword id="KW-0347">Helicase</keyword>
<keyword id="KW-0378">Hydrolase</keyword>
<keyword id="KW-0413">Isomerase</keyword>
<keyword id="KW-0479">Metal-binding</keyword>
<keyword id="KW-0547">Nucleotide-binding</keyword>
<keyword id="KW-1185">Reference proteome</keyword>
<reference evidence="14" key="1">
    <citation type="submission" date="2006-10" db="EMBL/GenBank/DDBJ databases">
        <authorList>
            <person name="Fleischmann R.D."/>
            <person name="Dodson R.J."/>
            <person name="Haft D.H."/>
            <person name="Merkel J.S."/>
            <person name="Nelson W.C."/>
            <person name="Fraser C.M."/>
        </authorList>
    </citation>
    <scope>NUCLEOTIDE SEQUENCE [LARGE SCALE GENOMIC DNA]</scope>
    <source>
        <strain>ATCC 700084 / mc(2)155</strain>
    </source>
</reference>
<reference evidence="15" key="2">
    <citation type="journal article" date="2007" name="Genome Biol.">
        <title>Interrupted coding sequences in Mycobacterium smegmatis: authentic mutations or sequencing errors?</title>
        <authorList>
            <person name="Deshayes C."/>
            <person name="Perrodou E."/>
            <person name="Gallien S."/>
            <person name="Euphrasie D."/>
            <person name="Schaeffer C."/>
            <person name="Van-Dorsselaer A."/>
            <person name="Poch O."/>
            <person name="Lecompte O."/>
            <person name="Reyrat J.-M."/>
        </authorList>
    </citation>
    <scope>NUCLEOTIDE SEQUENCE [LARGE SCALE GENOMIC DNA]</scope>
    <source>
        <strain>ATCC 700084 / mc(2)155</strain>
    </source>
</reference>
<reference evidence="15" key="3">
    <citation type="journal article" date="2009" name="Genome Res.">
        <title>Ortho-proteogenomics: multiple proteomes investigation through orthology and a new MS-based protocol.</title>
        <authorList>
            <person name="Gallien S."/>
            <person name="Perrodou E."/>
            <person name="Carapito C."/>
            <person name="Deshayes C."/>
            <person name="Reyrat J.-M."/>
            <person name="Van Dorsselaer A."/>
            <person name="Poch O."/>
            <person name="Schaeffer C."/>
            <person name="Lecompte O."/>
        </authorList>
    </citation>
    <scope>NUCLEOTIDE SEQUENCE [LARGE SCALE GENOMIC DNA]</scope>
    <source>
        <strain>ATCC 700084 / mc(2)155</strain>
    </source>
</reference>
<reference key="4">
    <citation type="journal article" date="2013" name="J. Biol. Chem.">
        <title>Mycobacterium smegmatis Lhr Is a DNA-dependent ATPase and a 3'-to-5' DNA translocase and helicase that prefers to unwind 3'-tailed RNA:DNA hybrids.</title>
        <authorList>
            <person name="Ordonez H."/>
            <person name="Shuman S."/>
        </authorList>
    </citation>
    <scope>FUNCTION AS A HELICASE</scope>
    <scope>FUNCTION AS AN ATPASE</scope>
    <scope>CATALYTIC ACTIVITY</scope>
    <scope>COFACTOR</scope>
    <scope>BIOPHYSICOCHEMICAL PROPERTIES</scope>
    <scope>SUBUNIT</scope>
    <scope>DOMAIN</scope>
</reference>
<reference key="5">
    <citation type="journal article" date="2023" name="Nucleic Acids Res.">
        <title>Mycobacterial helicase Lhr abets resistance to DNA crosslinking agents mitomycin C and cisplatin.</title>
        <authorList>
            <person name="Warren G.M."/>
            <person name="Ejaz A."/>
            <person name="Fay A."/>
            <person name="Glickman M.S."/>
            <person name="Shuman S."/>
        </authorList>
    </citation>
    <scope>FUNCTION AS A HELICASE</scope>
    <scope>CATALYTIC ACTIVITY</scope>
    <scope>DOMAIN</scope>
    <scope>INDUCTION</scope>
    <scope>DISRUPTION PHENOTYPE</scope>
    <scope>MUTAGENESIS OF 170-ASP-GLU-171; TRP-597; 1199-HIS--ARG-1206 AND ARG-1286</scope>
    <source>
        <strain>ATCC 700084 / mc(2)155</strain>
    </source>
</reference>
<reference key="6">
    <citation type="journal article" date="2024" name="MBio">
        <title>Structure and in vivo psoralen DNA crosslink repair activity of mycobacterial Nei2.</title>
        <authorList>
            <person name="Warren G.M."/>
            <person name="Shuman S."/>
        </authorList>
    </citation>
    <scope>FUNCTION</scope>
    <scope>DISRUPTION PHENOTYPE</scope>
    <scope>MUTAGENESIS OF 170-ASP-GLU-171; TRP-597; 1199-HIS--ARG-1206 AND ARG-1286</scope>
    <source>
        <strain>ATCC 700084 / mc(2)155</strain>
    </source>
</reference>
<reference evidence="17" key="7">
    <citation type="journal article" date="2018" name="Nucleic Acids Res.">
        <title>Structure of mycobacterial 3'-to-5' RNA:DNA helicase Lhr bound to a ssDNA tracking strand highlights distinctive features of a novel family of bacterial helicases.</title>
        <authorList>
            <person name="Ejaz A."/>
            <person name="Ordonez H."/>
            <person name="Jacewicz A."/>
            <person name="Ferrao R."/>
            <person name="Shuman S."/>
        </authorList>
    </citation>
    <scope>X-RAY CRYSTALLOGRAPHY (2.80 ANGSTROMS) OF 1-856 IN COMPLEX WITH SSDNA; MG(2+) AND ATP ANALOG</scope>
    <scope>FUNCTION</scope>
    <scope>CATALYTIC ACTIVITY</scope>
    <scope>DOMAIN</scope>
    <scope>MUTAGENESIS OF ARG-122; THR-145; SER-148; ARG-279; ILE-528; GLU-550; TRP-597 AND ARG-777</scope>
    <scope>ATP-BINDING</scope>
    <scope>DNA-BINDING</scope>
</reference>
<reference evidence="18" key="8">
    <citation type="journal article" date="2021" name="Nucleic Acids Res.">
        <title>Oligomeric quaternary structure of Escherichia coli and Mycobacterium smegmatis Lhr helicases is nucleated by a novel C-terminal domain composed of five winged-helix modules.</title>
        <authorList>
            <person name="Warren G.M."/>
            <person name="Wang J."/>
            <person name="Patel D.J."/>
            <person name="Shuman S."/>
        </authorList>
    </citation>
    <scope>STRUCTURE BY ELECTRON MICROSCOPY (3.60 ANGSTROMS) OF 895-1499</scope>
    <scope>SUBUNIT</scope>
    <scope>DOMAIN</scope>
</reference>
<dbReference type="EC" id="3.2.2.27" evidence="1"/>
<dbReference type="EC" id="5.6.2.-" evidence="4 5 7"/>
<dbReference type="EC" id="5.6.2.4" evidence="4 7"/>
<dbReference type="EMBL" id="CP000480">
    <property type="protein sequence ID" value="ABK70223.1"/>
    <property type="molecule type" value="Genomic_DNA"/>
</dbReference>
<dbReference type="EMBL" id="CP001663">
    <property type="protein sequence ID" value="AFP38187.1"/>
    <property type="molecule type" value="Genomic_DNA"/>
</dbReference>
<dbReference type="RefSeq" id="WP_011727880.1">
    <property type="nucleotide sequence ID" value="NZ_SIJM01000028.1"/>
</dbReference>
<dbReference type="RefSeq" id="YP_886129.1">
    <property type="nucleotide sequence ID" value="NC_008596.1"/>
</dbReference>
<dbReference type="PDB" id="5V9X">
    <property type="method" value="X-ray"/>
    <property type="resolution" value="2.80 A"/>
    <property type="chains" value="A=1-856"/>
</dbReference>
<dbReference type="PDB" id="7LHL">
    <property type="method" value="EM"/>
    <property type="resolution" value="3.60 A"/>
    <property type="chains" value="A/B/C/D=1-1507"/>
</dbReference>
<dbReference type="PDBsum" id="5V9X"/>
<dbReference type="PDBsum" id="7LHL"/>
<dbReference type="SMR" id="A0QT91"/>
<dbReference type="STRING" id="246196.MSMEG_1757"/>
<dbReference type="PaxDb" id="246196-MSMEI_1715"/>
<dbReference type="KEGG" id="msb:LJ00_08770"/>
<dbReference type="KEGG" id="msm:MSMEG_1757"/>
<dbReference type="PATRIC" id="fig|246196.19.peg.1740"/>
<dbReference type="eggNOG" id="COG1201">
    <property type="taxonomic scope" value="Bacteria"/>
</dbReference>
<dbReference type="OrthoDB" id="9815222at2"/>
<dbReference type="Proteomes" id="UP000000757">
    <property type="component" value="Chromosome"/>
</dbReference>
<dbReference type="Proteomes" id="UP000006158">
    <property type="component" value="Chromosome"/>
</dbReference>
<dbReference type="GO" id="GO:0005524">
    <property type="term" value="F:ATP binding"/>
    <property type="evidence" value="ECO:0007669"/>
    <property type="project" value="UniProtKB-KW"/>
</dbReference>
<dbReference type="GO" id="GO:0016887">
    <property type="term" value="F:ATP hydrolysis activity"/>
    <property type="evidence" value="ECO:0007669"/>
    <property type="project" value="InterPro"/>
</dbReference>
<dbReference type="GO" id="GO:0003677">
    <property type="term" value="F:DNA binding"/>
    <property type="evidence" value="ECO:0007669"/>
    <property type="project" value="TreeGrafter"/>
</dbReference>
<dbReference type="GO" id="GO:0004386">
    <property type="term" value="F:helicase activity"/>
    <property type="evidence" value="ECO:0007669"/>
    <property type="project" value="UniProtKB-KW"/>
</dbReference>
<dbReference type="GO" id="GO:0046872">
    <property type="term" value="F:metal ion binding"/>
    <property type="evidence" value="ECO:0007669"/>
    <property type="project" value="UniProtKB-KW"/>
</dbReference>
<dbReference type="CDD" id="cd17922">
    <property type="entry name" value="DEXHc_LHR-like"/>
    <property type="match status" value="1"/>
</dbReference>
<dbReference type="CDD" id="cd18796">
    <property type="entry name" value="SF2_C_LHR"/>
    <property type="match status" value="1"/>
</dbReference>
<dbReference type="Gene3D" id="3.40.50.300">
    <property type="entry name" value="P-loop containing nucleotide triphosphate hydrolases"/>
    <property type="match status" value="2"/>
</dbReference>
<dbReference type="InterPro" id="IPR003593">
    <property type="entry name" value="AAA+_ATPase"/>
</dbReference>
<dbReference type="InterPro" id="IPR052511">
    <property type="entry name" value="ATP-dep_Helicase"/>
</dbReference>
<dbReference type="InterPro" id="IPR013701">
    <property type="entry name" value="DEAD/DEAH_assoc"/>
</dbReference>
<dbReference type="InterPro" id="IPR011545">
    <property type="entry name" value="DEAD/DEAH_box_helicase_dom"/>
</dbReference>
<dbReference type="InterPro" id="IPR014001">
    <property type="entry name" value="Helicase_ATP-bd"/>
</dbReference>
<dbReference type="InterPro" id="IPR001650">
    <property type="entry name" value="Helicase_C-like"/>
</dbReference>
<dbReference type="InterPro" id="IPR045628">
    <property type="entry name" value="Lhr_WH_dom"/>
</dbReference>
<dbReference type="InterPro" id="IPR027417">
    <property type="entry name" value="P-loop_NTPase"/>
</dbReference>
<dbReference type="InterPro" id="IPR055369">
    <property type="entry name" value="WH2_Lhr"/>
</dbReference>
<dbReference type="InterPro" id="IPR055368">
    <property type="entry name" value="WH3_Lhr"/>
</dbReference>
<dbReference type="InterPro" id="IPR055367">
    <property type="entry name" value="WH4_Lhr"/>
</dbReference>
<dbReference type="NCBIfam" id="NF007284">
    <property type="entry name" value="PRK09751.1"/>
    <property type="match status" value="1"/>
</dbReference>
<dbReference type="PANTHER" id="PTHR47962:SF5">
    <property type="entry name" value="ATP-DEPENDENT HELICASE LHR-RELATED"/>
    <property type="match status" value="1"/>
</dbReference>
<dbReference type="PANTHER" id="PTHR47962">
    <property type="entry name" value="ATP-DEPENDENT HELICASE LHR-RELATED-RELATED"/>
    <property type="match status" value="1"/>
</dbReference>
<dbReference type="Pfam" id="PF00270">
    <property type="entry name" value="DEAD"/>
    <property type="match status" value="1"/>
</dbReference>
<dbReference type="Pfam" id="PF08494">
    <property type="entry name" value="DEAD_assoc"/>
    <property type="match status" value="1"/>
</dbReference>
<dbReference type="Pfam" id="PF00271">
    <property type="entry name" value="Helicase_C"/>
    <property type="match status" value="1"/>
</dbReference>
<dbReference type="Pfam" id="PF23236">
    <property type="entry name" value="WH2_Lhr"/>
    <property type="match status" value="1"/>
</dbReference>
<dbReference type="Pfam" id="PF23235">
    <property type="entry name" value="WH3_Lhr"/>
    <property type="match status" value="1"/>
</dbReference>
<dbReference type="Pfam" id="PF23234">
    <property type="entry name" value="WH4_Lhr"/>
    <property type="match status" value="1"/>
</dbReference>
<dbReference type="Pfam" id="PF19306">
    <property type="entry name" value="WH_Lhr"/>
    <property type="match status" value="1"/>
</dbReference>
<dbReference type="SMART" id="SM00382">
    <property type="entry name" value="AAA"/>
    <property type="match status" value="1"/>
</dbReference>
<dbReference type="SMART" id="SM00487">
    <property type="entry name" value="DEXDc"/>
    <property type="match status" value="1"/>
</dbReference>
<dbReference type="SMART" id="SM00490">
    <property type="entry name" value="HELICc"/>
    <property type="match status" value="1"/>
</dbReference>
<dbReference type="SUPFAM" id="SSF52540">
    <property type="entry name" value="P-loop containing nucleoside triphosphate hydrolases"/>
    <property type="match status" value="1"/>
</dbReference>
<dbReference type="PROSITE" id="PS51192">
    <property type="entry name" value="HELICASE_ATP_BIND_1"/>
    <property type="match status" value="1"/>
</dbReference>
<dbReference type="PROSITE" id="PS51194">
    <property type="entry name" value="HELICASE_CTER"/>
    <property type="match status" value="1"/>
</dbReference>